<dbReference type="EC" id="2.5.1.16" evidence="1"/>
<dbReference type="EMBL" id="CP000885">
    <property type="protein sequence ID" value="ABX43411.1"/>
    <property type="molecule type" value="Genomic_DNA"/>
</dbReference>
<dbReference type="RefSeq" id="WP_012201062.1">
    <property type="nucleotide sequence ID" value="NC_010001.1"/>
</dbReference>
<dbReference type="SMR" id="A9KQ99"/>
<dbReference type="STRING" id="357809.Cphy_3054"/>
<dbReference type="KEGG" id="cpy:Cphy_3054"/>
<dbReference type="eggNOG" id="COG0421">
    <property type="taxonomic scope" value="Bacteria"/>
</dbReference>
<dbReference type="HOGENOM" id="CLU_048199_0_0_9"/>
<dbReference type="OrthoDB" id="9793120at2"/>
<dbReference type="UniPathway" id="UPA00248">
    <property type="reaction ID" value="UER00314"/>
</dbReference>
<dbReference type="Proteomes" id="UP000000370">
    <property type="component" value="Chromosome"/>
</dbReference>
<dbReference type="GO" id="GO:0005829">
    <property type="term" value="C:cytosol"/>
    <property type="evidence" value="ECO:0007669"/>
    <property type="project" value="TreeGrafter"/>
</dbReference>
<dbReference type="GO" id="GO:0004766">
    <property type="term" value="F:spermidine synthase activity"/>
    <property type="evidence" value="ECO:0007669"/>
    <property type="project" value="UniProtKB-UniRule"/>
</dbReference>
<dbReference type="GO" id="GO:0008295">
    <property type="term" value="P:spermidine biosynthetic process"/>
    <property type="evidence" value="ECO:0007669"/>
    <property type="project" value="UniProtKB-UniRule"/>
</dbReference>
<dbReference type="CDD" id="cd02440">
    <property type="entry name" value="AdoMet_MTases"/>
    <property type="match status" value="1"/>
</dbReference>
<dbReference type="Gene3D" id="2.30.140.10">
    <property type="entry name" value="Spermidine synthase, tetramerisation domain"/>
    <property type="match status" value="1"/>
</dbReference>
<dbReference type="Gene3D" id="3.40.50.150">
    <property type="entry name" value="Vaccinia Virus protein VP39"/>
    <property type="match status" value="1"/>
</dbReference>
<dbReference type="HAMAP" id="MF_00198">
    <property type="entry name" value="Spermidine_synth"/>
    <property type="match status" value="1"/>
</dbReference>
<dbReference type="InterPro" id="IPR030374">
    <property type="entry name" value="PABS"/>
</dbReference>
<dbReference type="InterPro" id="IPR029063">
    <property type="entry name" value="SAM-dependent_MTases_sf"/>
</dbReference>
<dbReference type="InterPro" id="IPR001045">
    <property type="entry name" value="Spermi_synthase"/>
</dbReference>
<dbReference type="InterPro" id="IPR035246">
    <property type="entry name" value="Spermidine_synt_N"/>
</dbReference>
<dbReference type="InterPro" id="IPR037163">
    <property type="entry name" value="Spermidine_synt_N_sf"/>
</dbReference>
<dbReference type="NCBIfam" id="NF002010">
    <property type="entry name" value="PRK00811.1"/>
    <property type="match status" value="1"/>
</dbReference>
<dbReference type="NCBIfam" id="TIGR00417">
    <property type="entry name" value="speE"/>
    <property type="match status" value="1"/>
</dbReference>
<dbReference type="PANTHER" id="PTHR11558:SF11">
    <property type="entry name" value="SPERMIDINE SYNTHASE"/>
    <property type="match status" value="1"/>
</dbReference>
<dbReference type="PANTHER" id="PTHR11558">
    <property type="entry name" value="SPERMIDINE/SPERMINE SYNTHASE"/>
    <property type="match status" value="1"/>
</dbReference>
<dbReference type="Pfam" id="PF17284">
    <property type="entry name" value="Spermine_synt_N"/>
    <property type="match status" value="1"/>
</dbReference>
<dbReference type="Pfam" id="PF01564">
    <property type="entry name" value="Spermine_synth"/>
    <property type="match status" value="1"/>
</dbReference>
<dbReference type="SUPFAM" id="SSF53335">
    <property type="entry name" value="S-adenosyl-L-methionine-dependent methyltransferases"/>
    <property type="match status" value="1"/>
</dbReference>
<dbReference type="PROSITE" id="PS51006">
    <property type="entry name" value="PABS_2"/>
    <property type="match status" value="1"/>
</dbReference>
<protein>
    <recommendedName>
        <fullName evidence="1">Polyamine aminopropyltransferase</fullName>
    </recommendedName>
    <alternativeName>
        <fullName evidence="1">Putrescine aminopropyltransferase</fullName>
        <shortName evidence="1">PAPT</shortName>
    </alternativeName>
    <alternativeName>
        <fullName evidence="1">Spermidine synthase</fullName>
        <shortName evidence="1">SPDS</shortName>
        <shortName evidence="1">SPDSY</shortName>
        <ecNumber evidence="1">2.5.1.16</ecNumber>
    </alternativeName>
</protein>
<comment type="function">
    <text evidence="1">Catalyzes the irreversible transfer of a propylamine group from the amino donor S-adenosylmethioninamine (decarboxy-AdoMet) to putrescine (1,4-diaminobutane) to yield spermidine.</text>
</comment>
<comment type="catalytic activity">
    <reaction evidence="1">
        <text>S-adenosyl 3-(methylsulfanyl)propylamine + putrescine = S-methyl-5'-thioadenosine + spermidine + H(+)</text>
        <dbReference type="Rhea" id="RHEA:12721"/>
        <dbReference type="ChEBI" id="CHEBI:15378"/>
        <dbReference type="ChEBI" id="CHEBI:17509"/>
        <dbReference type="ChEBI" id="CHEBI:57443"/>
        <dbReference type="ChEBI" id="CHEBI:57834"/>
        <dbReference type="ChEBI" id="CHEBI:326268"/>
        <dbReference type="EC" id="2.5.1.16"/>
    </reaction>
</comment>
<comment type="pathway">
    <text evidence="1">Amine and polyamine biosynthesis; spermidine biosynthesis; spermidine from putrescine: step 1/1.</text>
</comment>
<comment type="subunit">
    <text evidence="1">Homodimer or homotetramer.</text>
</comment>
<comment type="subcellular location">
    <subcellularLocation>
        <location evidence="1">Cytoplasm</location>
    </subcellularLocation>
</comment>
<comment type="similarity">
    <text evidence="1">Belongs to the spermidine/spermine synthase family.</text>
</comment>
<accession>A9KQ99</accession>
<sequence length="283" mass="33155">MELWYTDQHTKDVRFSIKMKEQLVSVESEFQRIDIIETYEYGRVLVLDGEMMITEKDEFIYHEMITHVPMAVHPNIRNVLVIGAGDGGTIRELTKYDTIEHIDMVEVDKEIVQVCREYMPFTACKLNDKRVSMHFEEGLRFVRGKQDEYDLIIVDCADPFGPAEGLFTREFYGNCYKALHDDGILINQHESPFYNEHSGSVQKAHRHITAVFPLSTVYQCHIPSYPSGHWLFGFASKKYDPIKDLNDKKWNELKLPVRYYNTDLHKGCFYLPNYVKELLGSYE</sequence>
<organism>
    <name type="scientific">Lachnoclostridium phytofermentans (strain ATCC 700394 / DSM 18823 / ISDg)</name>
    <name type="common">Clostridium phytofermentans</name>
    <dbReference type="NCBI Taxonomy" id="357809"/>
    <lineage>
        <taxon>Bacteria</taxon>
        <taxon>Bacillati</taxon>
        <taxon>Bacillota</taxon>
        <taxon>Clostridia</taxon>
        <taxon>Lachnospirales</taxon>
        <taxon>Lachnospiraceae</taxon>
    </lineage>
</organism>
<proteinExistence type="inferred from homology"/>
<keyword id="KW-0963">Cytoplasm</keyword>
<keyword id="KW-0620">Polyamine biosynthesis</keyword>
<keyword id="KW-1185">Reference proteome</keyword>
<keyword id="KW-0745">Spermidine biosynthesis</keyword>
<keyword id="KW-0808">Transferase</keyword>
<name>SPEE_LACP7</name>
<reference key="1">
    <citation type="submission" date="2007-11" db="EMBL/GenBank/DDBJ databases">
        <title>Complete genome sequence of Clostridium phytofermentans ISDg.</title>
        <authorList>
            <person name="Leschine S.B."/>
            <person name="Warnick T.A."/>
            <person name="Blanchard J.L."/>
            <person name="Schnell D.J."/>
            <person name="Petit E.L."/>
            <person name="LaTouf W.G."/>
            <person name="Copeland A."/>
            <person name="Lucas S."/>
            <person name="Lapidus A."/>
            <person name="Barry K."/>
            <person name="Glavina del Rio T."/>
            <person name="Dalin E."/>
            <person name="Tice H."/>
            <person name="Pitluck S."/>
            <person name="Kiss H."/>
            <person name="Brettin T."/>
            <person name="Bruce D."/>
            <person name="Detter J.C."/>
            <person name="Han C."/>
            <person name="Kuske C."/>
            <person name="Schmutz J."/>
            <person name="Larimer F."/>
            <person name="Land M."/>
            <person name="Hauser L."/>
            <person name="Kyrpides N."/>
            <person name="Kim E.A."/>
            <person name="Richardson P."/>
        </authorList>
    </citation>
    <scope>NUCLEOTIDE SEQUENCE [LARGE SCALE GENOMIC DNA]</scope>
    <source>
        <strain>ATCC 700394 / DSM 18823 / ISDg</strain>
    </source>
</reference>
<evidence type="ECO:0000255" key="1">
    <source>
        <dbReference type="HAMAP-Rule" id="MF_00198"/>
    </source>
</evidence>
<gene>
    <name evidence="1" type="primary">speE</name>
    <name type="ordered locus">Cphy_3054</name>
</gene>
<feature type="chain" id="PRO_1000077708" description="Polyamine aminopropyltransferase">
    <location>
        <begin position="1"/>
        <end position="283"/>
    </location>
</feature>
<feature type="domain" description="PABS" evidence="1">
    <location>
        <begin position="2"/>
        <end position="237"/>
    </location>
</feature>
<feature type="active site" description="Proton acceptor" evidence="1">
    <location>
        <position position="155"/>
    </location>
</feature>
<feature type="binding site" evidence="1">
    <location>
        <position position="31"/>
    </location>
    <ligand>
        <name>S-methyl-5'-thioadenosine</name>
        <dbReference type="ChEBI" id="CHEBI:17509"/>
    </ligand>
</feature>
<feature type="binding site" evidence="1">
    <location>
        <position position="62"/>
    </location>
    <ligand>
        <name>spermidine</name>
        <dbReference type="ChEBI" id="CHEBI:57834"/>
    </ligand>
</feature>
<feature type="binding site" evidence="1">
    <location>
        <position position="86"/>
    </location>
    <ligand>
        <name>spermidine</name>
        <dbReference type="ChEBI" id="CHEBI:57834"/>
    </ligand>
</feature>
<feature type="binding site" evidence="1">
    <location>
        <position position="106"/>
    </location>
    <ligand>
        <name>S-methyl-5'-thioadenosine</name>
        <dbReference type="ChEBI" id="CHEBI:17509"/>
    </ligand>
</feature>
<feature type="binding site" evidence="1">
    <location>
        <begin position="137"/>
        <end position="138"/>
    </location>
    <ligand>
        <name>S-methyl-5'-thioadenosine</name>
        <dbReference type="ChEBI" id="CHEBI:17509"/>
    </ligand>
</feature>
<feature type="binding site" evidence="1">
    <location>
        <begin position="155"/>
        <end position="158"/>
    </location>
    <ligand>
        <name>spermidine</name>
        <dbReference type="ChEBI" id="CHEBI:57834"/>
    </ligand>
</feature>
<feature type="binding site" evidence="1">
    <location>
        <position position="162"/>
    </location>
    <ligand>
        <name>S-methyl-5'-thioadenosine</name>
        <dbReference type="ChEBI" id="CHEBI:17509"/>
    </ligand>
</feature>